<comment type="function">
    <text evidence="1">Involved in the biosynthesis of lipid A, a phosphorylated glycolipid that anchors the lipopolysaccharide to the outer membrane of the cell.</text>
</comment>
<comment type="catalytic activity">
    <reaction evidence="1">
        <text>a (3R)-hydroxyacyl-[ACP] + UDP-N-acetyl-alpha-D-glucosamine = a UDP-3-O-[(3R)-3-hydroxyacyl]-N-acetyl-alpha-D-glucosamine + holo-[ACP]</text>
        <dbReference type="Rhea" id="RHEA:67812"/>
        <dbReference type="Rhea" id="RHEA-COMP:9685"/>
        <dbReference type="Rhea" id="RHEA-COMP:9945"/>
        <dbReference type="ChEBI" id="CHEBI:57705"/>
        <dbReference type="ChEBI" id="CHEBI:64479"/>
        <dbReference type="ChEBI" id="CHEBI:78827"/>
        <dbReference type="ChEBI" id="CHEBI:173225"/>
        <dbReference type="EC" id="2.3.1.129"/>
    </reaction>
</comment>
<comment type="pathway">
    <text evidence="1">Glycolipid biosynthesis; lipid IV(A) biosynthesis; lipid IV(A) from (3R)-3-hydroxytetradecanoyl-[acyl-carrier-protein] and UDP-N-acetyl-alpha-D-glucosamine: step 1/6.</text>
</comment>
<comment type="subunit">
    <text evidence="1">Homotrimer.</text>
</comment>
<comment type="subcellular location">
    <subcellularLocation>
        <location evidence="1">Cytoplasm</location>
    </subcellularLocation>
</comment>
<comment type="similarity">
    <text evidence="1">Belongs to the transferase hexapeptide repeat family. LpxA subfamily.</text>
</comment>
<gene>
    <name evidence="1" type="primary">lpxA</name>
    <name type="ordered locus">RT0006</name>
</gene>
<reference key="1">
    <citation type="journal article" date="2004" name="J. Bacteriol.">
        <title>Complete genome sequence of Rickettsia typhi and comparison with sequences of other Rickettsiae.</title>
        <authorList>
            <person name="McLeod M.P."/>
            <person name="Qin X."/>
            <person name="Karpathy S.E."/>
            <person name="Gioia J."/>
            <person name="Highlander S.K."/>
            <person name="Fox G.E."/>
            <person name="McNeill T.Z."/>
            <person name="Jiang H."/>
            <person name="Muzny D."/>
            <person name="Jacob L.S."/>
            <person name="Hawes A.C."/>
            <person name="Sodergren E."/>
            <person name="Gill R."/>
            <person name="Hume J."/>
            <person name="Morgan M."/>
            <person name="Fan G."/>
            <person name="Amin A.G."/>
            <person name="Gibbs R.A."/>
            <person name="Hong C."/>
            <person name="Yu X.-J."/>
            <person name="Walker D.H."/>
            <person name="Weinstock G.M."/>
        </authorList>
    </citation>
    <scope>NUCLEOTIDE SEQUENCE [LARGE SCALE GENOMIC DNA]</scope>
    <source>
        <strain>ATCC VR-144 / Wilmington</strain>
    </source>
</reference>
<organism>
    <name type="scientific">Rickettsia typhi (strain ATCC VR-144 / Wilmington)</name>
    <dbReference type="NCBI Taxonomy" id="257363"/>
    <lineage>
        <taxon>Bacteria</taxon>
        <taxon>Pseudomonadati</taxon>
        <taxon>Pseudomonadota</taxon>
        <taxon>Alphaproteobacteria</taxon>
        <taxon>Rickettsiales</taxon>
        <taxon>Rickettsiaceae</taxon>
        <taxon>Rickettsieae</taxon>
        <taxon>Rickettsia</taxon>
        <taxon>typhus group</taxon>
    </lineage>
</organism>
<evidence type="ECO:0000255" key="1">
    <source>
        <dbReference type="HAMAP-Rule" id="MF_00387"/>
    </source>
</evidence>
<protein>
    <recommendedName>
        <fullName evidence="1">Acyl-[acyl-carrier-protein]--UDP-N-acetylglucosamine O-acyltransferase</fullName>
        <shortName evidence="1">UDP-N-acetylglucosamine acyltransferase</shortName>
        <ecNumber evidence="1">2.3.1.129</ecNumber>
    </recommendedName>
</protein>
<dbReference type="EC" id="2.3.1.129" evidence="1"/>
<dbReference type="EMBL" id="AE017197">
    <property type="protein sequence ID" value="AAU03496.1"/>
    <property type="molecule type" value="Genomic_DNA"/>
</dbReference>
<dbReference type="RefSeq" id="WP_011190483.1">
    <property type="nucleotide sequence ID" value="NC_006142.1"/>
</dbReference>
<dbReference type="SMR" id="Q68XZ6"/>
<dbReference type="KEGG" id="rty:RT0006"/>
<dbReference type="eggNOG" id="COG1043">
    <property type="taxonomic scope" value="Bacteria"/>
</dbReference>
<dbReference type="HOGENOM" id="CLU_061249_0_0_5"/>
<dbReference type="OrthoDB" id="9807278at2"/>
<dbReference type="UniPathway" id="UPA00359">
    <property type="reaction ID" value="UER00477"/>
</dbReference>
<dbReference type="Proteomes" id="UP000000604">
    <property type="component" value="Chromosome"/>
</dbReference>
<dbReference type="GO" id="GO:0005737">
    <property type="term" value="C:cytoplasm"/>
    <property type="evidence" value="ECO:0007669"/>
    <property type="project" value="UniProtKB-SubCell"/>
</dbReference>
<dbReference type="GO" id="GO:0016020">
    <property type="term" value="C:membrane"/>
    <property type="evidence" value="ECO:0007669"/>
    <property type="project" value="GOC"/>
</dbReference>
<dbReference type="GO" id="GO:0008780">
    <property type="term" value="F:acyl-[acyl-carrier-protein]-UDP-N-acetylglucosamine O-acyltransferase activity"/>
    <property type="evidence" value="ECO:0007669"/>
    <property type="project" value="UniProtKB-UniRule"/>
</dbReference>
<dbReference type="GO" id="GO:0009245">
    <property type="term" value="P:lipid A biosynthetic process"/>
    <property type="evidence" value="ECO:0007669"/>
    <property type="project" value="UniProtKB-UniRule"/>
</dbReference>
<dbReference type="CDD" id="cd03351">
    <property type="entry name" value="LbH_UDP-GlcNAc_AT"/>
    <property type="match status" value="1"/>
</dbReference>
<dbReference type="Gene3D" id="2.160.10.10">
    <property type="entry name" value="Hexapeptide repeat proteins"/>
    <property type="match status" value="1"/>
</dbReference>
<dbReference type="Gene3D" id="1.20.1180.10">
    <property type="entry name" value="Udp N-acetylglucosamine O-acyltransferase, C-terminal domain"/>
    <property type="match status" value="1"/>
</dbReference>
<dbReference type="HAMAP" id="MF_00387">
    <property type="entry name" value="LpxA"/>
    <property type="match status" value="1"/>
</dbReference>
<dbReference type="InterPro" id="IPR029098">
    <property type="entry name" value="Acetyltransf_C"/>
</dbReference>
<dbReference type="InterPro" id="IPR037157">
    <property type="entry name" value="Acetyltransf_C_sf"/>
</dbReference>
<dbReference type="InterPro" id="IPR001451">
    <property type="entry name" value="Hexapep"/>
</dbReference>
<dbReference type="InterPro" id="IPR010137">
    <property type="entry name" value="Lipid_A_LpxA"/>
</dbReference>
<dbReference type="InterPro" id="IPR011004">
    <property type="entry name" value="Trimer_LpxA-like_sf"/>
</dbReference>
<dbReference type="NCBIfam" id="TIGR01852">
    <property type="entry name" value="lipid_A_lpxA"/>
    <property type="match status" value="1"/>
</dbReference>
<dbReference type="NCBIfam" id="NF003657">
    <property type="entry name" value="PRK05289.1"/>
    <property type="match status" value="1"/>
</dbReference>
<dbReference type="PANTHER" id="PTHR43480">
    <property type="entry name" value="ACYL-[ACYL-CARRIER-PROTEIN]--UDP-N-ACETYLGLUCOSAMINE O-ACYLTRANSFERASE"/>
    <property type="match status" value="1"/>
</dbReference>
<dbReference type="PANTHER" id="PTHR43480:SF1">
    <property type="entry name" value="ACYL-[ACYL-CARRIER-PROTEIN]--UDP-N-ACETYLGLUCOSAMINE O-ACYLTRANSFERASE, MITOCHONDRIAL-RELATED"/>
    <property type="match status" value="1"/>
</dbReference>
<dbReference type="Pfam" id="PF13720">
    <property type="entry name" value="Acetyltransf_11"/>
    <property type="match status" value="1"/>
</dbReference>
<dbReference type="Pfam" id="PF00132">
    <property type="entry name" value="Hexapep"/>
    <property type="match status" value="1"/>
</dbReference>
<dbReference type="PIRSF" id="PIRSF000456">
    <property type="entry name" value="UDP-GlcNAc_acltr"/>
    <property type="match status" value="1"/>
</dbReference>
<dbReference type="SUPFAM" id="SSF51161">
    <property type="entry name" value="Trimeric LpxA-like enzymes"/>
    <property type="match status" value="1"/>
</dbReference>
<name>LPXA_RICTY</name>
<keyword id="KW-0012">Acyltransferase</keyword>
<keyword id="KW-0963">Cytoplasm</keyword>
<keyword id="KW-0441">Lipid A biosynthesis</keyword>
<keyword id="KW-0444">Lipid biosynthesis</keyword>
<keyword id="KW-0443">Lipid metabolism</keyword>
<keyword id="KW-0677">Repeat</keyword>
<keyword id="KW-0808">Transferase</keyword>
<feature type="chain" id="PRO_0000273129" description="Acyl-[acyl-carrier-protein]--UDP-N-acetylglucosamine O-acyltransferase">
    <location>
        <begin position="1"/>
        <end position="264"/>
    </location>
</feature>
<accession>Q68XZ6</accession>
<proteinExistence type="inferred from homology"/>
<sequence>MSNSNIHTTAIIAEGAKFGKNVKVGPYCIIGPEVVLHDNVELKSHVVIDGITEIGENTVIYPFASIGQPPQILKYANERSSTIIGSNNTIREYVTVQAGSKSGGMITRVGNNNLFMVGVHIGHDCKIGNNLVFANYVSLAGHIKVGDYAIIGGLSAVHQYTRIGEYSMIGGLSPVSADVIPFGLVSSKRAVLEGLNLIGMNRKGFDKVDSLTALNAVEEIFLGKGNFADRIKQVAEKYKNNSIVTQIIDFLNQDSSRSFCHFKK</sequence>